<proteinExistence type="inferred from homology"/>
<evidence type="ECO:0000255" key="1">
    <source>
        <dbReference type="HAMAP-Rule" id="MF_00303"/>
    </source>
</evidence>
<name>TIG_ACIAD</name>
<feature type="chain" id="PRO_0000179298" description="Trigger factor">
    <location>
        <begin position="1"/>
        <end position="444"/>
    </location>
</feature>
<feature type="domain" description="PPIase FKBP-type" evidence="1">
    <location>
        <begin position="160"/>
        <end position="245"/>
    </location>
</feature>
<protein>
    <recommendedName>
        <fullName evidence="1">Trigger factor</fullName>
        <shortName evidence="1">TF</shortName>
        <ecNumber evidence="1">5.2.1.8</ecNumber>
    </recommendedName>
    <alternativeName>
        <fullName evidence="1">PPIase</fullName>
    </alternativeName>
</protein>
<comment type="function">
    <text evidence="1">Involved in protein export. Acts as a chaperone by maintaining the newly synthesized protein in an open conformation. Functions as a peptidyl-prolyl cis-trans isomerase.</text>
</comment>
<comment type="catalytic activity">
    <reaction evidence="1">
        <text>[protein]-peptidylproline (omega=180) = [protein]-peptidylproline (omega=0)</text>
        <dbReference type="Rhea" id="RHEA:16237"/>
        <dbReference type="Rhea" id="RHEA-COMP:10747"/>
        <dbReference type="Rhea" id="RHEA-COMP:10748"/>
        <dbReference type="ChEBI" id="CHEBI:83833"/>
        <dbReference type="ChEBI" id="CHEBI:83834"/>
        <dbReference type="EC" id="5.2.1.8"/>
    </reaction>
</comment>
<comment type="subcellular location">
    <subcellularLocation>
        <location>Cytoplasm</location>
    </subcellularLocation>
    <text evidence="1">About half TF is bound to the ribosome near the polypeptide exit tunnel while the other half is free in the cytoplasm.</text>
</comment>
<comment type="domain">
    <text evidence="1">Consists of 3 domains; the N-terminus binds the ribosome, the middle domain has PPIase activity, while the C-terminus has intrinsic chaperone activity on its own.</text>
</comment>
<comment type="similarity">
    <text evidence="1">Belongs to the FKBP-type PPIase family. Tig subfamily.</text>
</comment>
<keyword id="KW-0131">Cell cycle</keyword>
<keyword id="KW-0132">Cell division</keyword>
<keyword id="KW-0143">Chaperone</keyword>
<keyword id="KW-0963">Cytoplasm</keyword>
<keyword id="KW-0413">Isomerase</keyword>
<keyword id="KW-0697">Rotamase</keyword>
<organism>
    <name type="scientific">Acinetobacter baylyi (strain ATCC 33305 / BD413 / ADP1)</name>
    <dbReference type="NCBI Taxonomy" id="62977"/>
    <lineage>
        <taxon>Bacteria</taxon>
        <taxon>Pseudomonadati</taxon>
        <taxon>Pseudomonadota</taxon>
        <taxon>Gammaproteobacteria</taxon>
        <taxon>Moraxellales</taxon>
        <taxon>Moraxellaceae</taxon>
        <taxon>Acinetobacter</taxon>
    </lineage>
</organism>
<reference key="1">
    <citation type="journal article" date="2004" name="Nucleic Acids Res.">
        <title>Unique features revealed by the genome sequence of Acinetobacter sp. ADP1, a versatile and naturally transformation competent bacterium.</title>
        <authorList>
            <person name="Barbe V."/>
            <person name="Vallenet D."/>
            <person name="Fonknechten N."/>
            <person name="Kreimeyer A."/>
            <person name="Oztas S."/>
            <person name="Labarre L."/>
            <person name="Cruveiller S."/>
            <person name="Robert C."/>
            <person name="Duprat S."/>
            <person name="Wincker P."/>
            <person name="Ornston L.N."/>
            <person name="Weissenbach J."/>
            <person name="Marliere P."/>
            <person name="Cohen G.N."/>
            <person name="Medigue C."/>
        </authorList>
    </citation>
    <scope>NUCLEOTIDE SEQUENCE [LARGE SCALE GENOMIC DNA]</scope>
    <source>
        <strain>ATCC 33305 / BD413 / ADP1</strain>
    </source>
</reference>
<accession>Q6FEP9</accession>
<sequence length="444" mass="49694">MQVTTEAVSGVARRLNVSVPTSRINEQFEARLKRTAKTAKINGFRPGKVPLSRVRSDFGPGIYQEVVNDIIRDTVFEAIQQEKINAVGMPNIEKVEHKDDALVYEATVEVYPEVEVKAFDTLEVERKAAEINDKDVDAMIENLQKQRQTWAVTKGMAKKDMQVTFDFEGEVDGEKFEGGSAEDFKLVLGSGRMIPGFEDGIIGMKAGEEKVIDVTFPEDYQAANLAGKAAKFKITVKQVEKPKLPEIDAEFLKIFGISEEDGVEKLKADVRKNMEREVRNGLRNQVKQAAFDALVAANEIDVPSAMVAQEIDRQREQMIQQFTQQFGGAGAQSFDKSMLPDELFKEQAEKSVKLGVLVSKVLADAKLEVDQARVDTYIDEMASSYEDPTEVVDYFKNDKQQRAQIEAVVLEDQVVDHILAAAKVTETEVSYDDLLKEQQARQAR</sequence>
<gene>
    <name evidence="1" type="primary">tig</name>
    <name type="ordered locus">ACIAD0533</name>
</gene>
<dbReference type="EC" id="5.2.1.8" evidence="1"/>
<dbReference type="EMBL" id="CR543861">
    <property type="protein sequence ID" value="CAG67459.1"/>
    <property type="molecule type" value="Genomic_DNA"/>
</dbReference>
<dbReference type="RefSeq" id="WP_004920071.1">
    <property type="nucleotide sequence ID" value="NC_005966.1"/>
</dbReference>
<dbReference type="SMR" id="Q6FEP9"/>
<dbReference type="STRING" id="202950.GCA_001485005_00771"/>
<dbReference type="GeneID" id="45233012"/>
<dbReference type="KEGG" id="aci:ACIAD0533"/>
<dbReference type="eggNOG" id="COG0544">
    <property type="taxonomic scope" value="Bacteria"/>
</dbReference>
<dbReference type="HOGENOM" id="CLU_033058_2_0_6"/>
<dbReference type="OrthoDB" id="9767721at2"/>
<dbReference type="BioCyc" id="ASP62977:ACIAD_RS02420-MONOMER"/>
<dbReference type="Proteomes" id="UP000000430">
    <property type="component" value="Chromosome"/>
</dbReference>
<dbReference type="GO" id="GO:0005737">
    <property type="term" value="C:cytoplasm"/>
    <property type="evidence" value="ECO:0007669"/>
    <property type="project" value="UniProtKB-SubCell"/>
</dbReference>
<dbReference type="GO" id="GO:0003755">
    <property type="term" value="F:peptidyl-prolyl cis-trans isomerase activity"/>
    <property type="evidence" value="ECO:0007669"/>
    <property type="project" value="UniProtKB-UniRule"/>
</dbReference>
<dbReference type="GO" id="GO:0044183">
    <property type="term" value="F:protein folding chaperone"/>
    <property type="evidence" value="ECO:0007669"/>
    <property type="project" value="TreeGrafter"/>
</dbReference>
<dbReference type="GO" id="GO:0043022">
    <property type="term" value="F:ribosome binding"/>
    <property type="evidence" value="ECO:0007669"/>
    <property type="project" value="TreeGrafter"/>
</dbReference>
<dbReference type="GO" id="GO:0051083">
    <property type="term" value="P:'de novo' cotranslational protein folding"/>
    <property type="evidence" value="ECO:0007669"/>
    <property type="project" value="TreeGrafter"/>
</dbReference>
<dbReference type="GO" id="GO:0051301">
    <property type="term" value="P:cell division"/>
    <property type="evidence" value="ECO:0007669"/>
    <property type="project" value="UniProtKB-KW"/>
</dbReference>
<dbReference type="GO" id="GO:0061077">
    <property type="term" value="P:chaperone-mediated protein folding"/>
    <property type="evidence" value="ECO:0007669"/>
    <property type="project" value="TreeGrafter"/>
</dbReference>
<dbReference type="GO" id="GO:0015031">
    <property type="term" value="P:protein transport"/>
    <property type="evidence" value="ECO:0007669"/>
    <property type="project" value="UniProtKB-UniRule"/>
</dbReference>
<dbReference type="GO" id="GO:0043335">
    <property type="term" value="P:protein unfolding"/>
    <property type="evidence" value="ECO:0007669"/>
    <property type="project" value="TreeGrafter"/>
</dbReference>
<dbReference type="FunFam" id="3.10.50.40:FF:000001">
    <property type="entry name" value="Trigger factor"/>
    <property type="match status" value="1"/>
</dbReference>
<dbReference type="Gene3D" id="3.10.50.40">
    <property type="match status" value="1"/>
</dbReference>
<dbReference type="Gene3D" id="3.30.70.1050">
    <property type="entry name" value="Trigger factor ribosome-binding domain"/>
    <property type="match status" value="1"/>
</dbReference>
<dbReference type="Gene3D" id="1.10.3120.10">
    <property type="entry name" value="Trigger factor, C-terminal domain"/>
    <property type="match status" value="1"/>
</dbReference>
<dbReference type="HAMAP" id="MF_00303">
    <property type="entry name" value="Trigger_factor_Tig"/>
    <property type="match status" value="1"/>
</dbReference>
<dbReference type="InterPro" id="IPR046357">
    <property type="entry name" value="PPIase_dom_sf"/>
</dbReference>
<dbReference type="InterPro" id="IPR001179">
    <property type="entry name" value="PPIase_FKBP_dom"/>
</dbReference>
<dbReference type="InterPro" id="IPR005215">
    <property type="entry name" value="Trig_fac"/>
</dbReference>
<dbReference type="InterPro" id="IPR008880">
    <property type="entry name" value="Trigger_fac_C"/>
</dbReference>
<dbReference type="InterPro" id="IPR037041">
    <property type="entry name" value="Trigger_fac_C_sf"/>
</dbReference>
<dbReference type="InterPro" id="IPR008881">
    <property type="entry name" value="Trigger_fac_ribosome-bd_bac"/>
</dbReference>
<dbReference type="InterPro" id="IPR036611">
    <property type="entry name" value="Trigger_fac_ribosome-bd_sf"/>
</dbReference>
<dbReference type="InterPro" id="IPR027304">
    <property type="entry name" value="Trigger_fact/SurA_dom_sf"/>
</dbReference>
<dbReference type="NCBIfam" id="TIGR00115">
    <property type="entry name" value="tig"/>
    <property type="match status" value="1"/>
</dbReference>
<dbReference type="PANTHER" id="PTHR30560">
    <property type="entry name" value="TRIGGER FACTOR CHAPERONE AND PEPTIDYL-PROLYL CIS/TRANS ISOMERASE"/>
    <property type="match status" value="1"/>
</dbReference>
<dbReference type="PANTHER" id="PTHR30560:SF3">
    <property type="entry name" value="TRIGGER FACTOR-LIKE PROTEIN TIG, CHLOROPLASTIC"/>
    <property type="match status" value="1"/>
</dbReference>
<dbReference type="Pfam" id="PF00254">
    <property type="entry name" value="FKBP_C"/>
    <property type="match status" value="1"/>
</dbReference>
<dbReference type="Pfam" id="PF05698">
    <property type="entry name" value="Trigger_C"/>
    <property type="match status" value="1"/>
</dbReference>
<dbReference type="Pfam" id="PF05697">
    <property type="entry name" value="Trigger_N"/>
    <property type="match status" value="1"/>
</dbReference>
<dbReference type="PIRSF" id="PIRSF003095">
    <property type="entry name" value="Trigger_factor"/>
    <property type="match status" value="1"/>
</dbReference>
<dbReference type="SUPFAM" id="SSF54534">
    <property type="entry name" value="FKBP-like"/>
    <property type="match status" value="1"/>
</dbReference>
<dbReference type="SUPFAM" id="SSF109998">
    <property type="entry name" value="Triger factor/SurA peptide-binding domain-like"/>
    <property type="match status" value="1"/>
</dbReference>
<dbReference type="SUPFAM" id="SSF102735">
    <property type="entry name" value="Trigger factor ribosome-binding domain"/>
    <property type="match status" value="1"/>
</dbReference>
<dbReference type="PROSITE" id="PS50059">
    <property type="entry name" value="FKBP_PPIASE"/>
    <property type="match status" value="1"/>
</dbReference>